<sequence>MFGLFGLWRTFDSVVFYLTLIVGLGGPVGNGLVLWNLGFRIKKGPFSIYLLHLAAADFLFLSCRVGFSVAQAALGAQDTLYFVLTFLWFAVGLWLLAAFSVERCLSDLFPACYQGCRPRHASAVLCALVWTPTLPAVPLPANACGLLRNSACPLVCPRYHVASVTWFLVLARVAWTAGVVLFVWVTCCSTRPRPRLYGIVLGALLLLFFCGLPSVFYWSLQPLLNFLLPVFSPLATLLACVNSSSKPLIYSGLGRQPGKREPLRSVLRRALGEGAELGARGQSLPMGLL</sequence>
<comment type="function">
    <text evidence="1">Orphan receptor. May regulate nociceptor function and/or development, including the sensation or modulation of pain (By similarity).</text>
</comment>
<comment type="subcellular location">
    <subcellularLocation>
        <location>Cell membrane</location>
        <topology>Multi-pass membrane protein</topology>
    </subcellularLocation>
</comment>
<comment type="similarity">
    <text evidence="3">Belongs to the G-protein coupled receptor 1 family. Mas subfamily.</text>
</comment>
<reference key="1">
    <citation type="journal article" date="2004" name="Nature">
        <title>The DNA sequence and comparative analysis of human chromosome 10.</title>
        <authorList>
            <person name="Deloukas P."/>
            <person name="Earthrowl M.E."/>
            <person name="Grafham D.V."/>
            <person name="Rubenfield M."/>
            <person name="French L."/>
            <person name="Steward C.A."/>
            <person name="Sims S.K."/>
            <person name="Jones M.C."/>
            <person name="Searle S."/>
            <person name="Scott C."/>
            <person name="Howe K."/>
            <person name="Hunt S.E."/>
            <person name="Andrews T.D."/>
            <person name="Gilbert J.G.R."/>
            <person name="Swarbreck D."/>
            <person name="Ashurst J.L."/>
            <person name="Taylor A."/>
            <person name="Battles J."/>
            <person name="Bird C.P."/>
            <person name="Ainscough R."/>
            <person name="Almeida J.P."/>
            <person name="Ashwell R.I.S."/>
            <person name="Ambrose K.D."/>
            <person name="Babbage A.K."/>
            <person name="Bagguley C.L."/>
            <person name="Bailey J."/>
            <person name="Banerjee R."/>
            <person name="Bates K."/>
            <person name="Beasley H."/>
            <person name="Bray-Allen S."/>
            <person name="Brown A.J."/>
            <person name="Brown J.Y."/>
            <person name="Burford D.C."/>
            <person name="Burrill W."/>
            <person name="Burton J."/>
            <person name="Cahill P."/>
            <person name="Camire D."/>
            <person name="Carter N.P."/>
            <person name="Chapman J.C."/>
            <person name="Clark S.Y."/>
            <person name="Clarke G."/>
            <person name="Clee C.M."/>
            <person name="Clegg S."/>
            <person name="Corby N."/>
            <person name="Coulson A."/>
            <person name="Dhami P."/>
            <person name="Dutta I."/>
            <person name="Dunn M."/>
            <person name="Faulkner L."/>
            <person name="Frankish A."/>
            <person name="Frankland J.A."/>
            <person name="Garner P."/>
            <person name="Garnett J."/>
            <person name="Gribble S."/>
            <person name="Griffiths C."/>
            <person name="Grocock R."/>
            <person name="Gustafson E."/>
            <person name="Hammond S."/>
            <person name="Harley J.L."/>
            <person name="Hart E."/>
            <person name="Heath P.D."/>
            <person name="Ho T.P."/>
            <person name="Hopkins B."/>
            <person name="Horne J."/>
            <person name="Howden P.J."/>
            <person name="Huckle E."/>
            <person name="Hynds C."/>
            <person name="Johnson C."/>
            <person name="Johnson D."/>
            <person name="Kana A."/>
            <person name="Kay M."/>
            <person name="Kimberley A.M."/>
            <person name="Kershaw J.K."/>
            <person name="Kokkinaki M."/>
            <person name="Laird G.K."/>
            <person name="Lawlor S."/>
            <person name="Lee H.M."/>
            <person name="Leongamornlert D.A."/>
            <person name="Laird G."/>
            <person name="Lloyd C."/>
            <person name="Lloyd D.M."/>
            <person name="Loveland J."/>
            <person name="Lovell J."/>
            <person name="McLaren S."/>
            <person name="McLay K.E."/>
            <person name="McMurray A."/>
            <person name="Mashreghi-Mohammadi M."/>
            <person name="Matthews L."/>
            <person name="Milne S."/>
            <person name="Nickerson T."/>
            <person name="Nguyen M."/>
            <person name="Overton-Larty E."/>
            <person name="Palmer S.A."/>
            <person name="Pearce A.V."/>
            <person name="Peck A.I."/>
            <person name="Pelan S."/>
            <person name="Phillimore B."/>
            <person name="Porter K."/>
            <person name="Rice C.M."/>
            <person name="Rogosin A."/>
            <person name="Ross M.T."/>
            <person name="Sarafidou T."/>
            <person name="Sehra H.K."/>
            <person name="Shownkeen R."/>
            <person name="Skuce C.D."/>
            <person name="Smith M."/>
            <person name="Standring L."/>
            <person name="Sycamore N."/>
            <person name="Tester J."/>
            <person name="Thorpe A."/>
            <person name="Torcasso W."/>
            <person name="Tracey A."/>
            <person name="Tromans A."/>
            <person name="Tsolas J."/>
            <person name="Wall M."/>
            <person name="Walsh J."/>
            <person name="Wang H."/>
            <person name="Weinstock K."/>
            <person name="West A.P."/>
            <person name="Willey D.L."/>
            <person name="Whitehead S.L."/>
            <person name="Wilming L."/>
            <person name="Wray P.W."/>
            <person name="Young L."/>
            <person name="Chen Y."/>
            <person name="Lovering R.C."/>
            <person name="Moschonas N.K."/>
            <person name="Siebert R."/>
            <person name="Fechtel K."/>
            <person name="Bentley D."/>
            <person name="Durbin R.M."/>
            <person name="Hubbard T."/>
            <person name="Doucette-Stamm L."/>
            <person name="Beck S."/>
            <person name="Smith D.R."/>
            <person name="Rogers J."/>
        </authorList>
    </citation>
    <scope>NUCLEOTIDE SEQUENCE [LARGE SCALE GENOMIC DNA]</scope>
</reference>
<reference key="2">
    <citation type="journal article" date="2003" name="Proc. Natl. Acad. Sci. U.S.A.">
        <title>The G protein-coupled receptor repertoires of human and mouse.</title>
        <authorList>
            <person name="Vassilatis D.K."/>
            <person name="Hohmann J.G."/>
            <person name="Zeng H."/>
            <person name="Li F."/>
            <person name="Ranchalis J.E."/>
            <person name="Mortrud M.T."/>
            <person name="Brown A."/>
            <person name="Rodriguez S.S."/>
            <person name="Weller J.R."/>
            <person name="Wright A.C."/>
            <person name="Bergmann J.E."/>
            <person name="Gaitanaris G.A."/>
        </authorList>
    </citation>
    <scope>NUCLEOTIDE SEQUENCE [LARGE SCALE MRNA] OF 1-54</scope>
</reference>
<feature type="chain" id="PRO_0000069767" description="Mas-related G-protein coupled receptor member G">
    <location>
        <begin position="1"/>
        <end position="289"/>
    </location>
</feature>
<feature type="topological domain" description="Extracellular" evidence="2">
    <location>
        <begin position="1"/>
        <end position="13"/>
    </location>
</feature>
<feature type="transmembrane region" description="Helical; Name=1" evidence="2">
    <location>
        <begin position="14"/>
        <end position="34"/>
    </location>
</feature>
<feature type="topological domain" description="Cytoplasmic" evidence="2">
    <location>
        <begin position="35"/>
        <end position="42"/>
    </location>
</feature>
<feature type="transmembrane region" description="Helical; Name=2" evidence="2">
    <location>
        <begin position="43"/>
        <end position="63"/>
    </location>
</feature>
<feature type="topological domain" description="Extracellular" evidence="2">
    <location>
        <begin position="64"/>
        <end position="78"/>
    </location>
</feature>
<feature type="transmembrane region" description="Helical; Name=3" evidence="2">
    <location>
        <begin position="79"/>
        <end position="99"/>
    </location>
</feature>
<feature type="topological domain" description="Cytoplasmic" evidence="2">
    <location>
        <begin position="100"/>
        <end position="120"/>
    </location>
</feature>
<feature type="transmembrane region" description="Helical; Name=4" evidence="2">
    <location>
        <begin position="121"/>
        <end position="141"/>
    </location>
</feature>
<feature type="topological domain" description="Extracellular" evidence="2">
    <location>
        <begin position="142"/>
        <end position="163"/>
    </location>
</feature>
<feature type="transmembrane region" description="Helical; Name=5" evidence="2">
    <location>
        <begin position="164"/>
        <end position="184"/>
    </location>
</feature>
<feature type="topological domain" description="Cytoplasmic" evidence="2">
    <location>
        <begin position="185"/>
        <end position="195"/>
    </location>
</feature>
<feature type="transmembrane region" description="Helical; Name=6" evidence="2">
    <location>
        <begin position="196"/>
        <end position="216"/>
    </location>
</feature>
<feature type="topological domain" description="Extracellular" evidence="2">
    <location>
        <begin position="217"/>
        <end position="221"/>
    </location>
</feature>
<feature type="transmembrane region" description="Helical; Name=7" evidence="2">
    <location>
        <begin position="222"/>
        <end position="242"/>
    </location>
</feature>
<feature type="topological domain" description="Cytoplasmic" evidence="2">
    <location>
        <begin position="243"/>
        <end position="289"/>
    </location>
</feature>
<protein>
    <recommendedName>
        <fullName>Mas-related G-protein coupled receptor member G</fullName>
    </recommendedName>
    <alternativeName>
        <fullName>G-protein coupled receptor 169</fullName>
    </alternativeName>
</protein>
<gene>
    <name type="primary">MRGPRG</name>
    <name type="synonym">GPR169</name>
    <name type="synonym">MRGG</name>
</gene>
<dbReference type="EMBL" id="AC109309">
    <property type="status" value="NOT_ANNOTATED_CDS"/>
    <property type="molecule type" value="Genomic_DNA"/>
</dbReference>
<dbReference type="EMBL" id="AY255583">
    <property type="protein sequence ID" value="AAO85095.1"/>
    <property type="molecule type" value="mRNA"/>
</dbReference>
<dbReference type="CCDS" id="CCDS44520.1"/>
<dbReference type="RefSeq" id="NP_001157849.1">
    <property type="nucleotide sequence ID" value="NM_001164377.1"/>
</dbReference>
<dbReference type="SMR" id="Q86SM5"/>
<dbReference type="BioGRID" id="132171">
    <property type="interactions" value="1"/>
</dbReference>
<dbReference type="STRING" id="9606.ENSP00000330612"/>
<dbReference type="ChEMBL" id="CHEMBL4523881"/>
<dbReference type="BioMuta" id="MRGPRG"/>
<dbReference type="DMDM" id="115502419"/>
<dbReference type="PaxDb" id="9606-ENSP00000330612"/>
<dbReference type="Antibodypedia" id="23325">
    <property type="antibodies" value="42 antibodies from 15 providers"/>
</dbReference>
<dbReference type="DNASU" id="386746"/>
<dbReference type="Ensembl" id="ENST00000332314.3">
    <property type="protein sequence ID" value="ENSP00000330612.3"/>
    <property type="gene ID" value="ENSG00000182170.3"/>
</dbReference>
<dbReference type="GeneID" id="386746"/>
<dbReference type="KEGG" id="hsa:386746"/>
<dbReference type="MANE-Select" id="ENST00000332314.3">
    <property type="protein sequence ID" value="ENSP00000330612.3"/>
    <property type="RefSeq nucleotide sequence ID" value="NM_001164377.1"/>
    <property type="RefSeq protein sequence ID" value="NP_001157849.1"/>
</dbReference>
<dbReference type="UCSC" id="uc001lxp.2">
    <property type="organism name" value="human"/>
</dbReference>
<dbReference type="AGR" id="HGNC:24829"/>
<dbReference type="CTD" id="386746"/>
<dbReference type="GeneCards" id="MRGPRG"/>
<dbReference type="HGNC" id="HGNC:24829">
    <property type="gene designation" value="MRGPRG"/>
</dbReference>
<dbReference type="HPA" id="ENSG00000182170">
    <property type="expression patterns" value="Not detected"/>
</dbReference>
<dbReference type="MIM" id="607234">
    <property type="type" value="gene"/>
</dbReference>
<dbReference type="neXtProt" id="NX_Q86SM5"/>
<dbReference type="PharmGKB" id="PA134953683"/>
<dbReference type="VEuPathDB" id="HostDB:ENSG00000182170"/>
<dbReference type="eggNOG" id="ENOG502TKZP">
    <property type="taxonomic scope" value="Eukaryota"/>
</dbReference>
<dbReference type="GeneTree" id="ENSGT01030000234639"/>
<dbReference type="HOGENOM" id="CLU_009579_4_1_1"/>
<dbReference type="InParanoid" id="Q86SM5"/>
<dbReference type="OMA" id="NGLVLWH"/>
<dbReference type="OrthoDB" id="9450540at2759"/>
<dbReference type="PAN-GO" id="Q86SM5">
    <property type="GO annotations" value="2 GO annotations based on evolutionary models"/>
</dbReference>
<dbReference type="PhylomeDB" id="Q86SM5"/>
<dbReference type="TreeFam" id="TF336336"/>
<dbReference type="PathwayCommons" id="Q86SM5"/>
<dbReference type="SignaLink" id="Q86SM5"/>
<dbReference type="BioGRID-ORCS" id="386746">
    <property type="hits" value="21 hits in 1139 CRISPR screens"/>
</dbReference>
<dbReference type="GeneWiki" id="MRGPRG"/>
<dbReference type="GenomeRNAi" id="386746"/>
<dbReference type="Pharos" id="Q86SM5">
    <property type="development level" value="Tdark"/>
</dbReference>
<dbReference type="PRO" id="PR:Q86SM5"/>
<dbReference type="Proteomes" id="UP000005640">
    <property type="component" value="Chromosome 11"/>
</dbReference>
<dbReference type="RNAct" id="Q86SM5">
    <property type="molecule type" value="protein"/>
</dbReference>
<dbReference type="Bgee" id="ENSG00000182170">
    <property type="expression patterns" value="Expressed in testis and 3 other cell types or tissues"/>
</dbReference>
<dbReference type="GO" id="GO:0005886">
    <property type="term" value="C:plasma membrane"/>
    <property type="evidence" value="ECO:0000318"/>
    <property type="project" value="GO_Central"/>
</dbReference>
<dbReference type="GO" id="GO:0004930">
    <property type="term" value="F:G protein-coupled receptor activity"/>
    <property type="evidence" value="ECO:0000318"/>
    <property type="project" value="GO_Central"/>
</dbReference>
<dbReference type="GO" id="GO:0007186">
    <property type="term" value="P:G protein-coupled receptor signaling pathway"/>
    <property type="evidence" value="ECO:0000318"/>
    <property type="project" value="GO_Central"/>
</dbReference>
<dbReference type="CDD" id="cd15111">
    <property type="entry name" value="7tmA_MrgprG"/>
    <property type="match status" value="1"/>
</dbReference>
<dbReference type="FunFam" id="1.20.1070.10:FF:000193">
    <property type="entry name" value="Mas-related G-protein coupled receptor member E"/>
    <property type="match status" value="1"/>
</dbReference>
<dbReference type="Gene3D" id="1.20.1070.10">
    <property type="entry name" value="Rhodopsin 7-helix transmembrane proteins"/>
    <property type="match status" value="1"/>
</dbReference>
<dbReference type="InterPro" id="IPR000276">
    <property type="entry name" value="GPCR_Rhodpsn"/>
</dbReference>
<dbReference type="InterPro" id="IPR017452">
    <property type="entry name" value="GPCR_Rhodpsn_7TM"/>
</dbReference>
<dbReference type="InterPro" id="IPR026234">
    <property type="entry name" value="MRGPCRFAMILY"/>
</dbReference>
<dbReference type="InterPro" id="IPR027336">
    <property type="entry name" value="MRGPCRG"/>
</dbReference>
<dbReference type="PANTHER" id="PTHR11334">
    <property type="entry name" value="MAS-RELATED G-PROTEIN COUPLED RECEPTOR"/>
    <property type="match status" value="1"/>
</dbReference>
<dbReference type="PANTHER" id="PTHR11334:SF32">
    <property type="entry name" value="MAS-RELATED G-PROTEIN COUPLED RECEPTOR MEMBER G"/>
    <property type="match status" value="1"/>
</dbReference>
<dbReference type="PRINTS" id="PR00237">
    <property type="entry name" value="GPCRRHODOPSN"/>
</dbReference>
<dbReference type="PRINTS" id="PR02108">
    <property type="entry name" value="MRGPCRFAMILY"/>
</dbReference>
<dbReference type="SUPFAM" id="SSF81321">
    <property type="entry name" value="Family A G protein-coupled receptor-like"/>
    <property type="match status" value="1"/>
</dbReference>
<dbReference type="PROSITE" id="PS50262">
    <property type="entry name" value="G_PROTEIN_RECEP_F1_2"/>
    <property type="match status" value="1"/>
</dbReference>
<proteinExistence type="evidence at transcript level"/>
<accession>Q86SM5</accession>
<keyword id="KW-1003">Cell membrane</keyword>
<keyword id="KW-0297">G-protein coupled receptor</keyword>
<keyword id="KW-0472">Membrane</keyword>
<keyword id="KW-0675">Receptor</keyword>
<keyword id="KW-1185">Reference proteome</keyword>
<keyword id="KW-0807">Transducer</keyword>
<keyword id="KW-0812">Transmembrane</keyword>
<keyword id="KW-1133">Transmembrane helix</keyword>
<organism>
    <name type="scientific">Homo sapiens</name>
    <name type="common">Human</name>
    <dbReference type="NCBI Taxonomy" id="9606"/>
    <lineage>
        <taxon>Eukaryota</taxon>
        <taxon>Metazoa</taxon>
        <taxon>Chordata</taxon>
        <taxon>Craniata</taxon>
        <taxon>Vertebrata</taxon>
        <taxon>Euteleostomi</taxon>
        <taxon>Mammalia</taxon>
        <taxon>Eutheria</taxon>
        <taxon>Euarchontoglires</taxon>
        <taxon>Primates</taxon>
        <taxon>Haplorrhini</taxon>
        <taxon>Catarrhini</taxon>
        <taxon>Hominidae</taxon>
        <taxon>Homo</taxon>
    </lineage>
</organism>
<evidence type="ECO:0000250" key="1"/>
<evidence type="ECO:0000255" key="2"/>
<evidence type="ECO:0000255" key="3">
    <source>
        <dbReference type="PROSITE-ProRule" id="PRU00521"/>
    </source>
</evidence>
<name>MRGRG_HUMAN</name>